<gene>
    <name evidence="1" type="primary">top6B</name>
    <name type="ordered locus">YN1551_1608</name>
</gene>
<comment type="function">
    <text evidence="1">Relaxes both positive and negative superturns and exhibits a strong decatenase activity.</text>
</comment>
<comment type="catalytic activity">
    <reaction evidence="1">
        <text>ATP-dependent breakage, passage and rejoining of double-stranded DNA.</text>
        <dbReference type="EC" id="5.6.2.2"/>
    </reaction>
</comment>
<comment type="subunit">
    <text evidence="1">Homodimer. Heterotetramer of two Top6A and two Top6B chains.</text>
</comment>
<comment type="similarity">
    <text evidence="1">Belongs to the TOP6B family.</text>
</comment>
<organism>
    <name type="scientific">Saccharolobus islandicus (strain Y.N.15.51 / Yellowstone #2)</name>
    <name type="common">Sulfolobus islandicus</name>
    <dbReference type="NCBI Taxonomy" id="419942"/>
    <lineage>
        <taxon>Archaea</taxon>
        <taxon>Thermoproteota</taxon>
        <taxon>Thermoprotei</taxon>
        <taxon>Sulfolobales</taxon>
        <taxon>Sulfolobaceae</taxon>
        <taxon>Saccharolobus</taxon>
    </lineage>
</organism>
<feature type="chain" id="PRO_1000205146" description="Type 2 DNA topoisomerase 6 subunit B">
    <location>
        <begin position="1"/>
        <end position="530"/>
    </location>
</feature>
<feature type="binding site" evidence="1">
    <location>
        <position position="42"/>
    </location>
    <ligand>
        <name>ATP</name>
        <dbReference type="ChEBI" id="CHEBI:30616"/>
    </ligand>
</feature>
<feature type="binding site" evidence="1">
    <location>
        <position position="76"/>
    </location>
    <ligand>
        <name>ATP</name>
        <dbReference type="ChEBI" id="CHEBI:30616"/>
    </ligand>
</feature>
<feature type="binding site" evidence="1">
    <location>
        <begin position="97"/>
        <end position="98"/>
    </location>
    <ligand>
        <name>ATP</name>
        <dbReference type="ChEBI" id="CHEBI:30616"/>
    </ligand>
</feature>
<feature type="binding site" evidence="1">
    <location>
        <begin position="106"/>
        <end position="113"/>
    </location>
    <ligand>
        <name>ATP</name>
        <dbReference type="ChEBI" id="CHEBI:30616"/>
    </ligand>
</feature>
<feature type="binding site" evidence="1">
    <location>
        <position position="427"/>
    </location>
    <ligand>
        <name>ATP</name>
        <dbReference type="ChEBI" id="CHEBI:30616"/>
    </ligand>
</feature>
<proteinExistence type="inferred from homology"/>
<accession>C3NHT6</accession>
<keyword id="KW-0067">ATP-binding</keyword>
<keyword id="KW-0238">DNA-binding</keyword>
<keyword id="KW-0413">Isomerase</keyword>
<keyword id="KW-0547">Nucleotide-binding</keyword>
<keyword id="KW-0799">Topoisomerase</keyword>
<evidence type="ECO:0000255" key="1">
    <source>
        <dbReference type="HAMAP-Rule" id="MF_00322"/>
    </source>
</evidence>
<reference key="1">
    <citation type="journal article" date="2009" name="Proc. Natl. Acad. Sci. U.S.A.">
        <title>Biogeography of the Sulfolobus islandicus pan-genome.</title>
        <authorList>
            <person name="Reno M.L."/>
            <person name="Held N.L."/>
            <person name="Fields C.J."/>
            <person name="Burke P.V."/>
            <person name="Whitaker R.J."/>
        </authorList>
    </citation>
    <scope>NUCLEOTIDE SEQUENCE [LARGE SCALE GENOMIC DNA]</scope>
    <source>
        <strain>Y.N.15.51 / Yellowstone #2</strain>
    </source>
</reference>
<protein>
    <recommendedName>
        <fullName evidence="1">Type 2 DNA topoisomerase 6 subunit B</fullName>
        <ecNumber evidence="1">5.6.2.2</ecNumber>
    </recommendedName>
    <alternativeName>
        <fullName evidence="1">Type II DNA topoisomerase VI subunit B</fullName>
        <shortName evidence="1">TopoVI-B</shortName>
    </alternativeName>
</protein>
<name>TOP6B_SACI1</name>
<sequence length="530" mass="60562">MSAKEKFTSLSPAEFFKRNPELAGFPNPARALYQTVRELIENSLDATDVHGILPNIKITIDLIDEARQIYKVNVVDNGIGIPPQEVPNAFGRVLYSSKYANRQTRGMYGLGVKAAVLYSQMHQDKPIEIETSPANSKRIYTFKLKIDINKNEPIIVERGSVENTRGFHGTSVAISIPGDWPKAKSRIYEYIKRTYIITPYAEFIFKDPEGNVTYYPRLTNKIPKPPQEVKPHPYGVDREEIKILINNLKRDYTIKEFLVNEFQSIGDTTADKILELAGLKPNKKVKNLTEEEITRLVETFKKYEDFRSPSADSLSVIGEDLIELGLKKIFNPDFAASITRKPKAYQGHPFIVEAGVAFGGSIPVGEEPIVLRYANKIPLIYDEKSDVIWKVVEELDWKRYGIESDQYQMVVMVHLCSTKIPYKSAGKESIAEVEDIEKEIKNALMEVARKLKQYLSEKRKEQEAKKKLLAYLKYIPEVSRSLATFLASGNKELVSKYQNEISEGLFKLISKKLDLINIEEYRKVYRVDNE</sequence>
<dbReference type="EC" id="5.6.2.2" evidence="1"/>
<dbReference type="EMBL" id="CP001404">
    <property type="protein sequence ID" value="ACP48696.1"/>
    <property type="molecule type" value="Genomic_DNA"/>
</dbReference>
<dbReference type="RefSeq" id="WP_012717515.1">
    <property type="nucleotide sequence ID" value="NC_012623.1"/>
</dbReference>
<dbReference type="SMR" id="C3NHT6"/>
<dbReference type="GeneID" id="7809040"/>
<dbReference type="KEGG" id="sin:YN1551_1608"/>
<dbReference type="HOGENOM" id="CLU_006403_0_0_2"/>
<dbReference type="Proteomes" id="UP000006818">
    <property type="component" value="Chromosome"/>
</dbReference>
<dbReference type="GO" id="GO:0005524">
    <property type="term" value="F:ATP binding"/>
    <property type="evidence" value="ECO:0007669"/>
    <property type="project" value="UniProtKB-UniRule"/>
</dbReference>
<dbReference type="GO" id="GO:0003677">
    <property type="term" value="F:DNA binding"/>
    <property type="evidence" value="ECO:0007669"/>
    <property type="project" value="UniProtKB-UniRule"/>
</dbReference>
<dbReference type="GO" id="GO:0003918">
    <property type="term" value="F:DNA topoisomerase type II (double strand cut, ATP-hydrolyzing) activity"/>
    <property type="evidence" value="ECO:0007669"/>
    <property type="project" value="UniProtKB-UniRule"/>
</dbReference>
<dbReference type="GO" id="GO:0006265">
    <property type="term" value="P:DNA topological change"/>
    <property type="evidence" value="ECO:0007669"/>
    <property type="project" value="UniProtKB-UniRule"/>
</dbReference>
<dbReference type="CDD" id="cd16933">
    <property type="entry name" value="HATPase_TopVIB-like"/>
    <property type="match status" value="1"/>
</dbReference>
<dbReference type="CDD" id="cd00823">
    <property type="entry name" value="TopoIIB_Trans"/>
    <property type="match status" value="1"/>
</dbReference>
<dbReference type="FunFam" id="1.10.8.50:FF:000014">
    <property type="entry name" value="Type 2 DNA topoisomerase 6 subunit B"/>
    <property type="match status" value="1"/>
</dbReference>
<dbReference type="FunFam" id="3.30.230.10:FF:000091">
    <property type="entry name" value="Type 2 DNA topoisomerase 6 subunit B"/>
    <property type="match status" value="1"/>
</dbReference>
<dbReference type="FunFam" id="3.30.565.10:FF:000062">
    <property type="entry name" value="Type 2 DNA topoisomerase 6 subunit B"/>
    <property type="match status" value="1"/>
</dbReference>
<dbReference type="Gene3D" id="1.10.8.50">
    <property type="match status" value="1"/>
</dbReference>
<dbReference type="Gene3D" id="3.30.230.10">
    <property type="match status" value="1"/>
</dbReference>
<dbReference type="Gene3D" id="3.30.565.10">
    <property type="entry name" value="Histidine kinase-like ATPase, C-terminal domain"/>
    <property type="match status" value="1"/>
</dbReference>
<dbReference type="HAMAP" id="MF_00322">
    <property type="entry name" value="Top6B"/>
    <property type="match status" value="1"/>
</dbReference>
<dbReference type="InterPro" id="IPR036890">
    <property type="entry name" value="HATPase_C_sf"/>
</dbReference>
<dbReference type="InterPro" id="IPR020568">
    <property type="entry name" value="Ribosomal_Su5_D2-typ_SF"/>
</dbReference>
<dbReference type="InterPro" id="IPR010979">
    <property type="entry name" value="Ribosomal_uS13-like_H2TH"/>
</dbReference>
<dbReference type="InterPro" id="IPR014721">
    <property type="entry name" value="Ribsml_uS5_D2-typ_fold_subgr"/>
</dbReference>
<dbReference type="InterPro" id="IPR005734">
    <property type="entry name" value="TopoVI_B"/>
</dbReference>
<dbReference type="InterPro" id="IPR015320">
    <property type="entry name" value="TopoVI_B_transducer"/>
</dbReference>
<dbReference type="NCBIfam" id="NF003218">
    <property type="entry name" value="PRK04184.1"/>
    <property type="match status" value="1"/>
</dbReference>
<dbReference type="NCBIfam" id="TIGR01052">
    <property type="entry name" value="top6b"/>
    <property type="match status" value="1"/>
</dbReference>
<dbReference type="PANTHER" id="PTHR48444">
    <property type="entry name" value="DNA TOPOISOMERASE 6 SUBUNIT B"/>
    <property type="match status" value="1"/>
</dbReference>
<dbReference type="PANTHER" id="PTHR48444:SF1">
    <property type="entry name" value="DNA TOPOISOMERASE 6 SUBUNIT B"/>
    <property type="match status" value="1"/>
</dbReference>
<dbReference type="Pfam" id="PF02518">
    <property type="entry name" value="HATPase_c"/>
    <property type="match status" value="1"/>
</dbReference>
<dbReference type="Pfam" id="PF05833">
    <property type="entry name" value="NFACT_N"/>
    <property type="match status" value="1"/>
</dbReference>
<dbReference type="Pfam" id="PF09239">
    <property type="entry name" value="Topo-VIb_trans"/>
    <property type="match status" value="1"/>
</dbReference>
<dbReference type="PIRSF" id="PIRSF006553">
    <property type="entry name" value="TopoVI_B"/>
    <property type="match status" value="1"/>
</dbReference>
<dbReference type="SMART" id="SM00387">
    <property type="entry name" value="HATPase_c"/>
    <property type="match status" value="1"/>
</dbReference>
<dbReference type="SUPFAM" id="SSF55874">
    <property type="entry name" value="ATPase domain of HSP90 chaperone/DNA topoisomerase II/histidine kinase"/>
    <property type="match status" value="1"/>
</dbReference>
<dbReference type="SUPFAM" id="SSF54211">
    <property type="entry name" value="Ribosomal protein S5 domain 2-like"/>
    <property type="match status" value="1"/>
</dbReference>
<dbReference type="SUPFAM" id="SSF46946">
    <property type="entry name" value="S13-like H2TH domain"/>
    <property type="match status" value="1"/>
</dbReference>